<comment type="similarity">
    <text evidence="1">Belongs to the bacterial ribosomal protein bL27 family.</text>
</comment>
<dbReference type="EMBL" id="CP000544">
    <property type="protein sequence ID" value="ABM62611.1"/>
    <property type="molecule type" value="Genomic_DNA"/>
</dbReference>
<dbReference type="RefSeq" id="WP_011814633.1">
    <property type="nucleotide sequence ID" value="NC_008789.1"/>
</dbReference>
<dbReference type="SMR" id="A1WY49"/>
<dbReference type="STRING" id="349124.Hhal_1847"/>
<dbReference type="KEGG" id="hha:Hhal_1847"/>
<dbReference type="eggNOG" id="COG0211">
    <property type="taxonomic scope" value="Bacteria"/>
</dbReference>
<dbReference type="HOGENOM" id="CLU_095424_4_1_6"/>
<dbReference type="OrthoDB" id="9803474at2"/>
<dbReference type="Proteomes" id="UP000000647">
    <property type="component" value="Chromosome"/>
</dbReference>
<dbReference type="GO" id="GO:0022625">
    <property type="term" value="C:cytosolic large ribosomal subunit"/>
    <property type="evidence" value="ECO:0007669"/>
    <property type="project" value="TreeGrafter"/>
</dbReference>
<dbReference type="GO" id="GO:0003735">
    <property type="term" value="F:structural constituent of ribosome"/>
    <property type="evidence" value="ECO:0007669"/>
    <property type="project" value="InterPro"/>
</dbReference>
<dbReference type="GO" id="GO:0006412">
    <property type="term" value="P:translation"/>
    <property type="evidence" value="ECO:0007669"/>
    <property type="project" value="UniProtKB-UniRule"/>
</dbReference>
<dbReference type="FunFam" id="2.40.50.100:FF:000001">
    <property type="entry name" value="50S ribosomal protein L27"/>
    <property type="match status" value="1"/>
</dbReference>
<dbReference type="Gene3D" id="2.40.50.100">
    <property type="match status" value="1"/>
</dbReference>
<dbReference type="HAMAP" id="MF_00539">
    <property type="entry name" value="Ribosomal_bL27"/>
    <property type="match status" value="1"/>
</dbReference>
<dbReference type="InterPro" id="IPR001684">
    <property type="entry name" value="Ribosomal_bL27"/>
</dbReference>
<dbReference type="InterPro" id="IPR018261">
    <property type="entry name" value="Ribosomal_bL27_CS"/>
</dbReference>
<dbReference type="NCBIfam" id="TIGR00062">
    <property type="entry name" value="L27"/>
    <property type="match status" value="1"/>
</dbReference>
<dbReference type="PANTHER" id="PTHR15893:SF0">
    <property type="entry name" value="LARGE RIBOSOMAL SUBUNIT PROTEIN BL27M"/>
    <property type="match status" value="1"/>
</dbReference>
<dbReference type="PANTHER" id="PTHR15893">
    <property type="entry name" value="RIBOSOMAL PROTEIN L27"/>
    <property type="match status" value="1"/>
</dbReference>
<dbReference type="Pfam" id="PF01016">
    <property type="entry name" value="Ribosomal_L27"/>
    <property type="match status" value="1"/>
</dbReference>
<dbReference type="PRINTS" id="PR00063">
    <property type="entry name" value="RIBOSOMALL27"/>
</dbReference>
<dbReference type="SUPFAM" id="SSF110324">
    <property type="entry name" value="Ribosomal L27 protein-like"/>
    <property type="match status" value="1"/>
</dbReference>
<dbReference type="PROSITE" id="PS00831">
    <property type="entry name" value="RIBOSOMAL_L27"/>
    <property type="match status" value="1"/>
</dbReference>
<reference key="1">
    <citation type="submission" date="2006-12" db="EMBL/GenBank/DDBJ databases">
        <title>Complete sequence of Halorhodospira halophila SL1.</title>
        <authorList>
            <consortium name="US DOE Joint Genome Institute"/>
            <person name="Copeland A."/>
            <person name="Lucas S."/>
            <person name="Lapidus A."/>
            <person name="Barry K."/>
            <person name="Detter J.C."/>
            <person name="Glavina del Rio T."/>
            <person name="Hammon N."/>
            <person name="Israni S."/>
            <person name="Dalin E."/>
            <person name="Tice H."/>
            <person name="Pitluck S."/>
            <person name="Saunders E."/>
            <person name="Brettin T."/>
            <person name="Bruce D."/>
            <person name="Han C."/>
            <person name="Tapia R."/>
            <person name="Schmutz J."/>
            <person name="Larimer F."/>
            <person name="Land M."/>
            <person name="Hauser L."/>
            <person name="Kyrpides N."/>
            <person name="Mikhailova N."/>
            <person name="Hoff W."/>
            <person name="Richardson P."/>
        </authorList>
    </citation>
    <scope>NUCLEOTIDE SEQUENCE [LARGE SCALE GENOMIC DNA]</scope>
    <source>
        <strain>DSM 244 / SL1</strain>
    </source>
</reference>
<keyword id="KW-1185">Reference proteome</keyword>
<keyword id="KW-0687">Ribonucleoprotein</keyword>
<keyword id="KW-0689">Ribosomal protein</keyword>
<gene>
    <name evidence="1" type="primary">rpmA</name>
    <name type="ordered locus">Hhal_1847</name>
</gene>
<protein>
    <recommendedName>
        <fullName evidence="1">Large ribosomal subunit protein bL27</fullName>
    </recommendedName>
    <alternativeName>
        <fullName evidence="3">50S ribosomal protein L27</fullName>
    </alternativeName>
</protein>
<organism>
    <name type="scientific">Halorhodospira halophila (strain DSM 244 / SL1)</name>
    <name type="common">Ectothiorhodospira halophila (strain DSM 244 / SL1)</name>
    <dbReference type="NCBI Taxonomy" id="349124"/>
    <lineage>
        <taxon>Bacteria</taxon>
        <taxon>Pseudomonadati</taxon>
        <taxon>Pseudomonadota</taxon>
        <taxon>Gammaproteobacteria</taxon>
        <taxon>Chromatiales</taxon>
        <taxon>Ectothiorhodospiraceae</taxon>
        <taxon>Halorhodospira</taxon>
    </lineage>
</organism>
<name>RL27_HALHL</name>
<accession>A1WY49</accession>
<sequence length="85" mass="9225">MAHKKAGGSTKNGRDSQSKRLGVKRYGGESVSAGSIIVRQRGTHFHAGENVGVGKDYTLFAKSDGRVVFERKGPAQRRRVRIEAA</sequence>
<proteinExistence type="inferred from homology"/>
<feature type="chain" id="PRO_1000017495" description="Large ribosomal subunit protein bL27">
    <location>
        <begin position="1"/>
        <end position="85"/>
    </location>
</feature>
<feature type="region of interest" description="Disordered" evidence="2">
    <location>
        <begin position="1"/>
        <end position="27"/>
    </location>
</feature>
<evidence type="ECO:0000255" key="1">
    <source>
        <dbReference type="HAMAP-Rule" id="MF_00539"/>
    </source>
</evidence>
<evidence type="ECO:0000256" key="2">
    <source>
        <dbReference type="SAM" id="MobiDB-lite"/>
    </source>
</evidence>
<evidence type="ECO:0000305" key="3"/>